<accession>Q4CUJ8</accession>
<accession>Q6JHV2</accession>
<sequence length="176" mass="19237">MGANGTLVECKRGESDAVVFRFLIFDAPSPSSVTAYVKLMQKYNVRHIVRACGQTYSAEAFEKQGMVVHGWSFDDGAPPTQTVIDNWLNLLEQEKNKSPPETIAVHCVAGLGRAPILVALALVEYGGMPPLDAVGYVRGRRKGAINQVQLNWLMRYKPRHQEGNEGSLSCAGCAVM</sequence>
<name>PRL1_TRYCC</name>
<comment type="function">
    <text evidence="3">Has protein tyrosine phosphatase activity.</text>
</comment>
<comment type="catalytic activity">
    <reaction evidence="3">
        <text>O-phospho-L-tyrosyl-[protein] + H2O = L-tyrosyl-[protein] + phosphate</text>
        <dbReference type="Rhea" id="RHEA:10684"/>
        <dbReference type="Rhea" id="RHEA-COMP:10136"/>
        <dbReference type="Rhea" id="RHEA-COMP:20101"/>
        <dbReference type="ChEBI" id="CHEBI:15377"/>
        <dbReference type="ChEBI" id="CHEBI:43474"/>
        <dbReference type="ChEBI" id="CHEBI:46858"/>
        <dbReference type="ChEBI" id="CHEBI:61978"/>
        <dbReference type="EC" id="3.1.3.48"/>
    </reaction>
</comment>
<comment type="activity regulation">
    <text evidence="1 3">Activated in a reduced environment which promotes the reduction of the disulfide bond between the regulatory Cys-52 and the catalytic Cys-107 residues (By similarity). Inhibited by sodium orthovanadate (PubMed:16151248).</text>
</comment>
<comment type="biophysicochemical properties">
    <phDependence>
        <text evidence="3">Optimum pH is 7.5-8.</text>
    </phDependence>
</comment>
<comment type="subcellular location">
    <subcellularLocation>
        <location evidence="3">Flagellar pocket</location>
    </subcellularLocation>
    <text evidence="3">In epimastigotes, localizes close to flagellar pocket, cytostome and to reservosomes. Reservosomes are prelysosomal-like acidic organelles found at the cell posterior end which contain the protease cruzipain and ingested proteins and lipids. In amastigotes and trypomastigotes partially co-localizes with concavalin A, a marker of the endocytic pathway.</text>
</comment>
<comment type="developmental stage">
    <text evidence="3">Expressed at the amastigote life cycle stage (at protein level). Expressed at the epimastigote, amastigote and trypomastigote life cycle stages.</text>
</comment>
<comment type="similarity">
    <text evidence="5">Belongs to the protein-tyrosine phosphatase family.</text>
</comment>
<organism evidence="8">
    <name type="scientific">Trypanosoma cruzi (strain CL Brener)</name>
    <dbReference type="NCBI Taxonomy" id="353153"/>
    <lineage>
        <taxon>Eukaryota</taxon>
        <taxon>Discoba</taxon>
        <taxon>Euglenozoa</taxon>
        <taxon>Kinetoplastea</taxon>
        <taxon>Metakinetoplastina</taxon>
        <taxon>Trypanosomatida</taxon>
        <taxon>Trypanosomatidae</taxon>
        <taxon>Trypanosoma</taxon>
        <taxon>Schizotrypanum</taxon>
    </lineage>
</organism>
<keyword id="KW-1015">Disulfide bond</keyword>
<keyword id="KW-0378">Hydrolase</keyword>
<keyword id="KW-0449">Lipoprotein</keyword>
<keyword id="KW-0488">Methylation</keyword>
<keyword id="KW-0636">Prenylation</keyword>
<keyword id="KW-0904">Protein phosphatase</keyword>
<keyword id="KW-1185">Reference proteome</keyword>
<reference evidence="6" key="1">
    <citation type="journal article" date="2005" name="Eukaryot. Cell">
        <title>Characterization of farnesylated protein tyrosine phosphatase TcPRL-1 from Trypanosoma cruzi.</title>
        <authorList>
            <person name="Cuevas I.C."/>
            <person name="Rohloff P."/>
            <person name="Sanchez D.O."/>
            <person name="Docampo R."/>
        </authorList>
    </citation>
    <scope>NUCLEOTIDE SEQUENCE [GENOMIC DNA]</scope>
    <scope>FUNCTION</scope>
    <scope>CATALYTIC ACTIVITY</scope>
    <scope>ACTIVITY REGULATION</scope>
    <scope>BIOPHYSICOCHEMICAL PROPERTIES</scope>
    <scope>SUBCELLULAR LOCATION</scope>
    <scope>DEVELOPMENTAL STAGE</scope>
    <scope>ISOPRENYLATION AT CYS-173</scope>
    <scope>MUTAGENESIS OF CYS-107 AND 173-CYS--MET-176</scope>
    <source>
        <strain evidence="6">CL Brener</strain>
    </source>
</reference>
<reference evidence="8" key="2">
    <citation type="journal article" date="2005" name="Science">
        <title>The genome sequence of Trypanosoma cruzi, etiologic agent of Chagas disease.</title>
        <authorList>
            <person name="El-Sayed N.M.A."/>
            <person name="Myler P.J."/>
            <person name="Bartholomeu D.C."/>
            <person name="Nilsson D."/>
            <person name="Aggarwal G."/>
            <person name="Tran A.-N."/>
            <person name="Ghedin E."/>
            <person name="Worthey E.A."/>
            <person name="Delcher A.L."/>
            <person name="Blandin G."/>
            <person name="Westenberger S.J."/>
            <person name="Caler E."/>
            <person name="Cerqueira G.C."/>
            <person name="Branche C."/>
            <person name="Haas B."/>
            <person name="Anupama A."/>
            <person name="Arner E."/>
            <person name="Aslund L."/>
            <person name="Attipoe P."/>
            <person name="Bontempi E."/>
            <person name="Bringaud F."/>
            <person name="Burton P."/>
            <person name="Cadag E."/>
            <person name="Campbell D.A."/>
            <person name="Carrington M."/>
            <person name="Crabtree J."/>
            <person name="Darban H."/>
            <person name="da Silveira J.F."/>
            <person name="de Jong P."/>
            <person name="Edwards K."/>
            <person name="Englund P.T."/>
            <person name="Fazelina G."/>
            <person name="Feldblyum T."/>
            <person name="Ferella M."/>
            <person name="Frasch A.C."/>
            <person name="Gull K."/>
            <person name="Horn D."/>
            <person name="Hou L."/>
            <person name="Huang Y."/>
            <person name="Kindlund E."/>
            <person name="Klingbeil M."/>
            <person name="Kluge S."/>
            <person name="Koo H."/>
            <person name="Lacerda D."/>
            <person name="Levin M.J."/>
            <person name="Lorenzi H."/>
            <person name="Louie T."/>
            <person name="Machado C.R."/>
            <person name="McCulloch R."/>
            <person name="McKenna A."/>
            <person name="Mizuno Y."/>
            <person name="Mottram J.C."/>
            <person name="Nelson S."/>
            <person name="Ochaya S."/>
            <person name="Osoegawa K."/>
            <person name="Pai G."/>
            <person name="Parsons M."/>
            <person name="Pentony M."/>
            <person name="Pettersson U."/>
            <person name="Pop M."/>
            <person name="Ramirez J.L."/>
            <person name="Rinta J."/>
            <person name="Robertson L."/>
            <person name="Salzberg S.L."/>
            <person name="Sanchez D.O."/>
            <person name="Seyler A."/>
            <person name="Sharma R."/>
            <person name="Shetty J."/>
            <person name="Simpson A.J."/>
            <person name="Sisk E."/>
            <person name="Tammi M.T."/>
            <person name="Tarleton R."/>
            <person name="Teixeira S."/>
            <person name="Van Aken S."/>
            <person name="Vogt C."/>
            <person name="Ward P.N."/>
            <person name="Wickstead B."/>
            <person name="Wortman J."/>
            <person name="White O."/>
            <person name="Fraser C.M."/>
            <person name="Stuart K.D."/>
            <person name="Andersson B."/>
        </authorList>
    </citation>
    <scope>NUCLEOTIDE SEQUENCE [LARGE SCALE GENOMIC DNA]</scope>
    <source>
        <strain evidence="8">CL Brener</strain>
    </source>
</reference>
<dbReference type="EC" id="3.1.3.48" evidence="3"/>
<dbReference type="EMBL" id="AY461711">
    <property type="protein sequence ID" value="AAS19277.1"/>
    <property type="molecule type" value="Genomic_DNA"/>
</dbReference>
<dbReference type="EMBL" id="AAHK01001847">
    <property type="protein sequence ID" value="EAN83950.1"/>
    <property type="molecule type" value="Genomic_DNA"/>
</dbReference>
<dbReference type="RefSeq" id="XP_805801.1">
    <property type="nucleotide sequence ID" value="XM_800708.1"/>
</dbReference>
<dbReference type="SMR" id="Q4CUJ8"/>
<dbReference type="STRING" id="353153.Q4CUJ8"/>
<dbReference type="PaxDb" id="353153-Q4CUJ8"/>
<dbReference type="EnsemblProtists" id="EAN83950">
    <property type="protein sequence ID" value="EAN83950"/>
    <property type="gene ID" value="Tc00.1047053503851.24"/>
</dbReference>
<dbReference type="GeneID" id="3535648"/>
<dbReference type="KEGG" id="tcr:503851.24"/>
<dbReference type="eggNOG" id="KOG2836">
    <property type="taxonomic scope" value="Eukaryota"/>
</dbReference>
<dbReference type="InParanoid" id="Q4CUJ8"/>
<dbReference type="OMA" id="CVIDEWL"/>
<dbReference type="BRENDA" id="3.1.3.48">
    <property type="organism ID" value="6524"/>
</dbReference>
<dbReference type="Proteomes" id="UP000002296">
    <property type="component" value="Unassembled WGS sequence"/>
</dbReference>
<dbReference type="GO" id="GO:0020016">
    <property type="term" value="C:ciliary pocket"/>
    <property type="evidence" value="ECO:0000314"/>
    <property type="project" value="UniProtKB"/>
</dbReference>
<dbReference type="GO" id="GO:0031910">
    <property type="term" value="C:cytostome"/>
    <property type="evidence" value="ECO:0000314"/>
    <property type="project" value="UniProtKB"/>
</dbReference>
<dbReference type="GO" id="GO:0000323">
    <property type="term" value="C:lytic vacuole"/>
    <property type="evidence" value="ECO:0000314"/>
    <property type="project" value="UniProtKB"/>
</dbReference>
<dbReference type="GO" id="GO:0004725">
    <property type="term" value="F:protein tyrosine phosphatase activity"/>
    <property type="evidence" value="ECO:0000315"/>
    <property type="project" value="UniProtKB"/>
</dbReference>
<dbReference type="GO" id="GO:0035335">
    <property type="term" value="P:peptidyl-tyrosine dephosphorylation"/>
    <property type="evidence" value="ECO:0000315"/>
    <property type="project" value="UniProtKB"/>
</dbReference>
<dbReference type="CDD" id="cd14500">
    <property type="entry name" value="PTP-IVa"/>
    <property type="match status" value="1"/>
</dbReference>
<dbReference type="FunFam" id="3.90.190.10:FF:000086">
    <property type="entry name" value="Protein tyrosine phosphatase-like protein"/>
    <property type="match status" value="1"/>
</dbReference>
<dbReference type="Gene3D" id="3.90.190.10">
    <property type="entry name" value="Protein tyrosine phosphatase superfamily"/>
    <property type="match status" value="1"/>
</dbReference>
<dbReference type="InterPro" id="IPR029021">
    <property type="entry name" value="Prot-tyrosine_phosphatase-like"/>
</dbReference>
<dbReference type="InterPro" id="IPR050561">
    <property type="entry name" value="PTP"/>
</dbReference>
<dbReference type="InterPro" id="IPR057023">
    <property type="entry name" value="PTP-SAK"/>
</dbReference>
<dbReference type="PANTHER" id="PTHR23339">
    <property type="entry name" value="TYROSINE SPECIFIC PROTEIN PHOSPHATASE AND DUAL SPECIFICITY PROTEIN PHOSPHATASE"/>
    <property type="match status" value="1"/>
</dbReference>
<dbReference type="Pfam" id="PF22784">
    <property type="entry name" value="PTP-SAK"/>
    <property type="match status" value="1"/>
</dbReference>
<dbReference type="SUPFAM" id="SSF52799">
    <property type="entry name" value="(Phosphotyrosine protein) phosphatases II"/>
    <property type="match status" value="1"/>
</dbReference>
<dbReference type="PROSITE" id="PS50056">
    <property type="entry name" value="TYR_PHOSPHATASE_2"/>
    <property type="match status" value="1"/>
</dbReference>
<dbReference type="PROSITE" id="PS50054">
    <property type="entry name" value="TYR_PHOSPHATASE_DUAL"/>
    <property type="match status" value="1"/>
</dbReference>
<evidence type="ECO:0000250" key="1">
    <source>
        <dbReference type="UniProtKB" id="Q4QEZ7"/>
    </source>
</evidence>
<evidence type="ECO:0000255" key="2">
    <source>
        <dbReference type="PROSITE-ProRule" id="PRU00160"/>
    </source>
</evidence>
<evidence type="ECO:0000269" key="3">
    <source>
    </source>
</evidence>
<evidence type="ECO:0000303" key="4">
    <source>
    </source>
</evidence>
<evidence type="ECO:0000305" key="5"/>
<evidence type="ECO:0000312" key="6">
    <source>
        <dbReference type="EMBL" id="AAS19277.1"/>
    </source>
</evidence>
<evidence type="ECO:0000312" key="7">
    <source>
        <dbReference type="EMBL" id="EAN83950.1"/>
    </source>
</evidence>
<evidence type="ECO:0000312" key="8">
    <source>
        <dbReference type="Proteomes" id="UP000002296"/>
    </source>
</evidence>
<proteinExistence type="evidence at protein level"/>
<gene>
    <name evidence="4" type="primary">PLR-1</name>
    <name evidence="7" type="ORF">Tc00.1047053503851.24</name>
</gene>
<feature type="chain" id="PRO_0000441638" description="Protein tyrosine phosphatase PRL-1">
    <location>
        <begin position="1"/>
        <end position="176"/>
    </location>
</feature>
<feature type="propeptide" id="PRO_0000441639" description="Removed in mature form" evidence="5">
    <location>
        <begin position="174"/>
        <end position="176"/>
    </location>
</feature>
<feature type="domain" description="Tyrosine-protein phosphatase" evidence="2">
    <location>
        <begin position="13"/>
        <end position="165"/>
    </location>
</feature>
<feature type="active site" description="Proton donor" evidence="1">
    <location>
        <position position="75"/>
    </location>
</feature>
<feature type="active site" description="Phosphocysteine intermediate" evidence="2">
    <location>
        <position position="107"/>
    </location>
</feature>
<feature type="binding site" evidence="1">
    <location>
        <begin position="109"/>
        <end position="113"/>
    </location>
    <ligand>
        <name>substrate</name>
    </ligand>
</feature>
<feature type="modified residue" description="Cysteine methyl ester" evidence="5">
    <location>
        <position position="173"/>
    </location>
</feature>
<feature type="lipid moiety-binding region" description="S-farnesyl cysteine" evidence="3">
    <location>
        <position position="173"/>
    </location>
</feature>
<feature type="disulfide bond" evidence="1">
    <location>
        <begin position="52"/>
        <end position="107"/>
    </location>
</feature>
<feature type="mutagenesis site" description="Loss of catalytic activity." evidence="3">
    <original>C</original>
    <variation>S</variation>
    <location>
        <position position="107"/>
    </location>
</feature>
<feature type="mutagenesis site" description="Loss of farnesylation. Localizes to the cytoplasm and loses localization to reservosomes." evidence="3">
    <location>
        <begin position="173"/>
        <end position="176"/>
    </location>
</feature>
<feature type="sequence conflict" description="In Ref. 2; EAN83950." evidence="5" ref="2">
    <original>R</original>
    <variation>H</variation>
    <location>
        <position position="21"/>
    </location>
</feature>
<feature type="sequence conflict" description="In Ref. 2; EAN83950." evidence="5" ref="2">
    <original>F</original>
    <variation>L</variation>
    <location>
        <position position="73"/>
    </location>
</feature>
<protein>
    <recommendedName>
        <fullName evidence="5">Protein tyrosine phosphatase PRL-1</fullName>
        <ecNumber evidence="3">3.1.3.48</ecNumber>
    </recommendedName>
</protein>